<organismHost>
    <name type="scientific">Aves</name>
    <dbReference type="NCBI Taxonomy" id="8782"/>
</organismHost>
<organismHost>
    <name type="scientific">Homo sapiens</name>
    <name type="common">Human</name>
    <dbReference type="NCBI Taxonomy" id="9606"/>
</organismHost>
<organismHost>
    <name type="scientific">Sus scrofa</name>
    <name type="common">Pig</name>
    <dbReference type="NCBI Taxonomy" id="9823"/>
</organismHost>
<reference key="1">
    <citation type="journal article" date="1984" name="J. Virol.">
        <title>Nucleotide sequence of the influenza virus A/USSR/90/77 hemagglutinin gene.</title>
        <authorList>
            <person name="Concannon P."/>
            <person name="Cummings I.W."/>
            <person name="Salser W.A."/>
        </authorList>
    </citation>
    <scope>NUCLEOTIDE SEQUENCE [GENOMIC RNA]</scope>
</reference>
<reference key="2">
    <citation type="submission" date="2006-03" db="EMBL/GenBank/DDBJ databases">
        <title>The NIAID influenza genome sequencing project.</title>
        <authorList>
            <person name="Ghedin E."/>
            <person name="Spiro D."/>
            <person name="Miller N."/>
            <person name="Zaborsky J."/>
            <person name="Feldblyum T."/>
            <person name="Subbu V."/>
            <person name="Shumway M."/>
            <person name="Sparenborg J."/>
            <person name="Groveman L."/>
            <person name="Halpin R."/>
            <person name="Sitz J."/>
            <person name="Koo H."/>
            <person name="Salzberg S.L."/>
            <person name="Webster R.G."/>
            <person name="Hoffmann E."/>
            <person name="Krauss S."/>
            <person name="Naeve C."/>
            <person name="Bao Y."/>
            <person name="Bolotov P."/>
            <person name="Dernovoy D."/>
            <person name="Kiryutin B."/>
            <person name="Lipman D.J."/>
            <person name="Tatusova T."/>
        </authorList>
    </citation>
    <scope>NUCLEOTIDE SEQUENCE [GENOMIC RNA]</scope>
</reference>
<reference key="3">
    <citation type="submission" date="2006-04" db="EMBL/GenBank/DDBJ databases">
        <title>Complete genome sequencing and analysis of selected influenza virus vaccine strains spanning six decades (1933-1999).</title>
        <authorList>
            <person name="Mbawuike I.N."/>
            <person name="Zhang Y."/>
            <person name="Yamada R.E."/>
            <person name="Nino D."/>
            <person name="Bui H.-H."/>
            <person name="Sette A."/>
            <person name="Couch R.B."/>
        </authorList>
    </citation>
    <scope>NUCLEOTIDE SEQUENCE [GENOMIC RNA]</scope>
</reference>
<reference key="4">
    <citation type="journal article" date="1983" name="Virology">
        <title>Identification of the binding sites to monoclonal antibodies on A/USSR/90/77 (H1N1) hemagglutinin and their involvement in antigenic drift in H1N1 influenza viruses.</title>
        <authorList>
            <person name="Nakajima S."/>
            <person name="Nakajima K."/>
            <person name="Kendal A.P."/>
        </authorList>
    </citation>
    <scope>NUCLEOTIDE SEQUENCE [GENOMIC RNA] OF 1-343</scope>
</reference>
<evidence type="ECO:0000250" key="1">
    <source>
        <dbReference type="UniProtKB" id="Q289M7"/>
    </source>
</evidence>
<evidence type="ECO:0000255" key="2">
    <source>
        <dbReference type="HAMAP-Rule" id="MF_04072"/>
    </source>
</evidence>
<evidence type="ECO:0000305" key="3"/>
<accession>P03453</accession>
<accession>Q1WP09</accession>
<keyword id="KW-1167">Clathrin- and caveolin-independent endocytosis of virus by host</keyword>
<keyword id="KW-1165">Clathrin-mediated endocytosis of virus by host</keyword>
<keyword id="KW-1015">Disulfide bond</keyword>
<keyword id="KW-1170">Fusion of virus membrane with host endosomal membrane</keyword>
<keyword id="KW-1168">Fusion of virus membrane with host membrane</keyword>
<keyword id="KW-0325">Glycoprotein</keyword>
<keyword id="KW-0348">Hemagglutinin</keyword>
<keyword id="KW-1032">Host cell membrane</keyword>
<keyword id="KW-1043">Host membrane</keyword>
<keyword id="KW-0945">Host-virus interaction</keyword>
<keyword id="KW-0449">Lipoprotein</keyword>
<keyword id="KW-0472">Membrane</keyword>
<keyword id="KW-0564">Palmitate</keyword>
<keyword id="KW-0732">Signal</keyword>
<keyword id="KW-0812">Transmembrane</keyword>
<keyword id="KW-1133">Transmembrane helix</keyword>
<keyword id="KW-1161">Viral attachment to host cell</keyword>
<keyword id="KW-0261">Viral envelope protein</keyword>
<keyword id="KW-1162">Viral penetration into host cytoplasm</keyword>
<keyword id="KW-0946">Virion</keyword>
<keyword id="KW-1164">Virus endocytosis by host</keyword>
<keyword id="KW-1160">Virus entry into host cell</keyword>
<proteinExistence type="inferred from homology"/>
<sequence length="566" mass="63587">MKAKLLVLLCALSATDADTICIGYHANNSTDTVDTVLEKNVTVTHSVNLLEDSHNGKLCRLKGIAPLQLGKCNIAGWILGNPECESLFSKKSWSYIAETPNSENGTCYPGYFADYEELREQLSSVSSFERFEIFPKERSWPKHNVTRGVTASCSHKGKSSFYRNLLWLTEKNGSYPNLSKSYVNNKEKEVLVLWGVHHPSNIEDQKTIYRKENAYVSVVSSNYNRRFTPEIAERPKVRGQAGRINYYWTLLEPGDTIIFEANGNLIAPWHAFALNRGFGSGIITSNASMDECDTKCQTPQGAINSSLPFQNIHPVTIGECPKYVRSTKLRMVTGLRNIPSIQSRGLFGAIAGFIEGGWTGMIDGWYGYHHQNEQGSGYAADQKSTQNAINGITNKVNSVIEKMNTQFTAVGKEFNKLEKRMENLNKKVDDGFLDIWTYNAELLVLLENERTLDFHDSNVKNLYEKVKSQLKNNAKEIGNGCFEFYHKCNNECMESVKNGTYDYPKYSEESKLNREKIDGVKLESMGVYQILAIYSTVASSLVLLVSLGAISFWMCSNGSLQCRICI</sequence>
<name>HEMA_I77AB</name>
<comment type="function">
    <text>Binds to sialic acid-containing receptors on the cell surface, bringing about the attachment of the virus particle to the cell. This attachment induces virion internalization of about two third of the virus particles through clathrin-dependent endocytosis and about one third through a clathrin- and caveolin-independent pathway. Plays a major role in the determination of host range restriction and virulence. Class I viral fusion protein. Responsible for penetration of the virus into the cell cytoplasm by mediating the fusion of the membrane of the endocytosed virus particle with the endosomal membrane. Low pH in endosomes induces an irreversible conformational change in HA2, releasing the fusion hydrophobic peptide. Several trimers are required to form a competent fusion pore.</text>
</comment>
<comment type="function">
    <text evidence="2">Binds to sialic acid-containing receptors on the cell surface, bringing about the attachment of the virus particle to the cell. This attachment induces virion internalization either through clathrin-dependent endocytosis or through clathrin- and caveolin-independent pathway. Plays a major role in the determination of host range restriction and virulence. Class I viral fusion protein. Responsible for penetration of the virus into the cell cytoplasm by mediating the fusion of the membrane of the endocytosed virus particle with the endosomal membrane. Low pH in endosomes induces an irreversible conformational change in HA2, releasing the fusion hydrophobic peptide. Several trimers are required to form a competent fusion pore.</text>
</comment>
<comment type="subunit">
    <text evidence="1">Homotrimer of disulfide-linked HA1-HA2. Interacts with human CACNA1C.</text>
</comment>
<comment type="subcellular location">
    <subcellularLocation>
        <location evidence="2">Virion membrane</location>
        <topology evidence="2">Single-pass type I membrane protein</topology>
    </subcellularLocation>
    <subcellularLocation>
        <location evidence="2">Host apical cell membrane</location>
        <topology evidence="2">Single-pass type I membrane protein</topology>
    </subcellularLocation>
    <text evidence="2">Targeted to the apical plasma membrane in epithelial polarized cells through a signal present in the transmembrane domain. Associated with glycosphingolipid- and cholesterol-enriched detergent-resistant lipid rafts.</text>
</comment>
<comment type="PTM">
    <text evidence="2">Palmitoylated.</text>
</comment>
<comment type="PTM">
    <text evidence="2">In natural infection, inactive HA is matured into HA1 and HA2 outside the cell by one or more trypsin-like, arginine-specific endoprotease secreted by the bronchial epithelial cells. One identified protease that may be involved in this process is secreted in lungs by club cells.</text>
</comment>
<comment type="miscellaneous">
    <text>Major glycoprotein, comprises over 80% of the envelope proteins present in virus particle.</text>
</comment>
<comment type="miscellaneous">
    <text>The extent of infection into host organism is determined by HA. Influenza viruses bud from the apical surface of polarized epithelial cells (e.g. bronchial epithelial cells) into lumen of lungs and are therefore usually pneumotropic. The reason is that HA is cleaved by tryptase clara which is restricted to lungs. However, HAs of H5 and H7 pantropic avian viruses subtypes can be cleaved by furin and subtilisin-type enzymes, allowing the virus to grow in other organs than lungs.</text>
</comment>
<comment type="miscellaneous">
    <text evidence="3">The influenza A genome consist of 8 RNA segments. Genetic variation of hemagglutinin and/or neuraminidase genes results in the emergence of new influenza strains. The mechanism of variation can be the result of point mutations or the result of genetic reassortment between segments of two different strains.</text>
</comment>
<comment type="similarity">
    <text evidence="2">Belongs to the influenza viruses hemagglutinin family.</text>
</comment>
<protein>
    <recommendedName>
        <fullName evidence="2">Hemagglutinin</fullName>
    </recommendedName>
    <component>
        <recommendedName>
            <fullName evidence="2">Hemagglutinin HA1 chain</fullName>
        </recommendedName>
    </component>
    <component>
        <recommendedName>
            <fullName evidence="2">Hemagglutinin HA2 chain</fullName>
        </recommendedName>
    </component>
</protein>
<gene>
    <name evidence="2" type="primary">HA</name>
</gene>
<feature type="signal peptide" evidence="2">
    <location>
        <begin position="1"/>
        <end position="17"/>
    </location>
</feature>
<feature type="chain" id="PRO_0000440468" description="Hemagglutinin" evidence="2">
    <location>
        <begin position="18"/>
        <end position="566"/>
    </location>
</feature>
<feature type="chain" id="PRO_0000039063" description="Hemagglutinin HA1 chain" evidence="2">
    <location>
        <begin position="18"/>
        <end position="343"/>
    </location>
</feature>
<feature type="chain" id="PRO_0000039064" description="Hemagglutinin HA2 chain" evidence="2">
    <location>
        <begin position="345"/>
        <end position="566"/>
    </location>
</feature>
<feature type="topological domain" description="Extracellular" evidence="2">
    <location>
        <begin position="18"/>
        <end position="529"/>
    </location>
</feature>
<feature type="transmembrane region" description="Helical" evidence="2">
    <location>
        <begin position="530"/>
        <end position="550"/>
    </location>
</feature>
<feature type="topological domain" description="Cytoplasmic" evidence="2">
    <location>
        <begin position="551"/>
        <end position="566"/>
    </location>
</feature>
<feature type="site" description="Cleavage; by host" evidence="2">
    <location>
        <begin position="344"/>
        <end position="345"/>
    </location>
</feature>
<feature type="lipid moiety-binding region" description="S-palmitoyl cysteine; by host" evidence="2">
    <location>
        <position position="555"/>
    </location>
</feature>
<feature type="lipid moiety-binding region" description="S-palmitoyl cysteine; by host" evidence="2">
    <location>
        <position position="562"/>
    </location>
</feature>
<feature type="lipid moiety-binding region" description="S-palmitoyl cysteine; by host" evidence="2">
    <location>
        <position position="565"/>
    </location>
</feature>
<feature type="glycosylation site" description="N-linked (GlcNAc...) asparagine; by host" evidence="2">
    <location>
        <position position="27"/>
    </location>
</feature>
<feature type="glycosylation site" description="N-linked (GlcNAc...) asparagine; by host" evidence="2">
    <location>
        <position position="28"/>
    </location>
</feature>
<feature type="glycosylation site" description="N-linked (GlcNAc...) asparagine; by host" evidence="2">
    <location>
        <position position="40"/>
    </location>
</feature>
<feature type="glycosylation site" description="N-linked (GlcNAc...) asparagine; by host" evidence="2">
    <location>
        <position position="104"/>
    </location>
</feature>
<feature type="glycosylation site" description="N-linked (GlcNAc...) asparagine; by host" evidence="2">
    <location>
        <position position="144"/>
    </location>
</feature>
<feature type="glycosylation site" description="N-linked (GlcNAc...) asparagine; by host" evidence="2">
    <location>
        <position position="172"/>
    </location>
</feature>
<feature type="glycosylation site" description="N-linked (GlcNAc...) asparagine; by host" evidence="2">
    <location>
        <position position="177"/>
    </location>
</feature>
<feature type="glycosylation site" description="N-linked (GlcNAc...) asparagine; by host" evidence="2">
    <location>
        <position position="286"/>
    </location>
</feature>
<feature type="glycosylation site" description="N-linked (GlcNAc...) asparagine; by host" evidence="2">
    <location>
        <position position="304"/>
    </location>
</feature>
<feature type="glycosylation site" description="N-linked (GlcNAc...) asparagine; by host" evidence="2">
    <location>
        <position position="498"/>
    </location>
</feature>
<feature type="disulfide bond" description="Interchain (between HA1 and HA2 chains)" evidence="2">
    <location>
        <begin position="21"/>
        <end position="481"/>
    </location>
</feature>
<feature type="disulfide bond" evidence="2">
    <location>
        <begin position="59"/>
        <end position="292"/>
    </location>
</feature>
<feature type="disulfide bond" evidence="2">
    <location>
        <begin position="72"/>
        <end position="84"/>
    </location>
</feature>
<feature type="disulfide bond" evidence="2">
    <location>
        <begin position="107"/>
        <end position="153"/>
    </location>
</feature>
<feature type="disulfide bond" evidence="2">
    <location>
        <begin position="296"/>
        <end position="320"/>
    </location>
</feature>
<feature type="disulfide bond" evidence="2">
    <location>
        <begin position="488"/>
        <end position="492"/>
    </location>
</feature>
<feature type="sequence conflict" description="In Ref. 1; AAA43206." evidence="3" ref="1">
    <original>S</original>
    <variation>A</variation>
    <location>
        <position position="13"/>
    </location>
</feature>
<feature type="sequence conflict" description="In Ref. 1; AAA43206." evidence="3" ref="1">
    <original>K</original>
    <variation>S</variation>
    <location>
        <position position="180"/>
    </location>
</feature>
<feature type="sequence conflict" description="In Ref. 4; AAA43240." evidence="3" ref="4">
    <location>
        <position position="296"/>
    </location>
</feature>
<feature type="sequence conflict" description="In Ref. 1; AAA43206." evidence="3" ref="1">
    <original>N</original>
    <variation>S</variation>
    <location>
        <position position="458"/>
    </location>
</feature>
<feature type="sequence conflict" description="In Ref. 1; AAA43206." evidence="3" ref="1">
    <original>L</original>
    <variation>A</variation>
    <location>
        <position position="462"/>
    </location>
</feature>
<organism>
    <name type="scientific">Influenza A virus (strain A/USSR/90/1977 H1N1)</name>
    <dbReference type="NCBI Taxonomy" id="381516"/>
    <lineage>
        <taxon>Viruses</taxon>
        <taxon>Riboviria</taxon>
        <taxon>Orthornavirae</taxon>
        <taxon>Negarnaviricota</taxon>
        <taxon>Polyploviricotina</taxon>
        <taxon>Insthoviricetes</taxon>
        <taxon>Articulavirales</taxon>
        <taxon>Orthomyxoviridae</taxon>
        <taxon>Alphainfluenzavirus</taxon>
        <taxon>Alphainfluenzavirus influenzae</taxon>
        <taxon>Influenza A virus</taxon>
    </lineage>
</organism>
<dbReference type="EMBL" id="K01330">
    <property type="protein sequence ID" value="AAA43206.1"/>
    <property type="molecule type" value="Genomic_RNA"/>
</dbReference>
<dbReference type="EMBL" id="CY010372">
    <property type="protein sequence ID" value="ABD95350.1"/>
    <property type="molecule type" value="Genomic_RNA"/>
</dbReference>
<dbReference type="EMBL" id="DQ508897">
    <property type="protein sequence ID" value="ABF21277.1"/>
    <property type="molecule type" value="Genomic_RNA"/>
</dbReference>
<dbReference type="EMBL" id="K01331">
    <property type="protein sequence ID" value="AAA43240.1"/>
    <property type="molecule type" value="Genomic_RNA"/>
</dbReference>
<dbReference type="PIR" id="A04064">
    <property type="entry name" value="HMIVUR"/>
</dbReference>
<dbReference type="SMR" id="P03453"/>
<dbReference type="GlyConnect" id="793">
    <property type="glycosylation" value="2 N-Linked glycans (1 site)"/>
</dbReference>
<dbReference type="GlyCosmos" id="P03453">
    <property type="glycosylation" value="10 sites, 2 glycans"/>
</dbReference>
<dbReference type="PRO" id="PR:P03453"/>
<dbReference type="Proteomes" id="UP000007793">
    <property type="component" value="Genome"/>
</dbReference>
<dbReference type="Proteomes" id="UP000121508">
    <property type="component" value="Genome"/>
</dbReference>
<dbReference type="GO" id="GO:0020002">
    <property type="term" value="C:host cell plasma membrane"/>
    <property type="evidence" value="ECO:0007669"/>
    <property type="project" value="UniProtKB-SubCell"/>
</dbReference>
<dbReference type="GO" id="GO:0016020">
    <property type="term" value="C:membrane"/>
    <property type="evidence" value="ECO:0007669"/>
    <property type="project" value="UniProtKB-UniRule"/>
</dbReference>
<dbReference type="GO" id="GO:0019031">
    <property type="term" value="C:viral envelope"/>
    <property type="evidence" value="ECO:0007669"/>
    <property type="project" value="UniProtKB-UniRule"/>
</dbReference>
<dbReference type="GO" id="GO:0055036">
    <property type="term" value="C:virion membrane"/>
    <property type="evidence" value="ECO:0007669"/>
    <property type="project" value="UniProtKB-SubCell"/>
</dbReference>
<dbReference type="GO" id="GO:0046789">
    <property type="term" value="F:host cell surface receptor binding"/>
    <property type="evidence" value="ECO:0007669"/>
    <property type="project" value="UniProtKB-UniRule"/>
</dbReference>
<dbReference type="GO" id="GO:0075512">
    <property type="term" value="P:clathrin-dependent endocytosis of virus by host cell"/>
    <property type="evidence" value="ECO:0007669"/>
    <property type="project" value="UniProtKB-UniRule"/>
</dbReference>
<dbReference type="GO" id="GO:0039654">
    <property type="term" value="P:fusion of virus membrane with host endosome membrane"/>
    <property type="evidence" value="ECO:0007669"/>
    <property type="project" value="UniProtKB-UniRule"/>
</dbReference>
<dbReference type="GO" id="GO:0019064">
    <property type="term" value="P:fusion of virus membrane with host plasma membrane"/>
    <property type="evidence" value="ECO:0007669"/>
    <property type="project" value="InterPro"/>
</dbReference>
<dbReference type="GO" id="GO:0046761">
    <property type="term" value="P:viral budding from plasma membrane"/>
    <property type="evidence" value="ECO:0007669"/>
    <property type="project" value="UniProtKB-UniRule"/>
</dbReference>
<dbReference type="GO" id="GO:0019062">
    <property type="term" value="P:virion attachment to host cell"/>
    <property type="evidence" value="ECO:0007669"/>
    <property type="project" value="UniProtKB-KW"/>
</dbReference>
<dbReference type="FunFam" id="3.90.20.10:FF:000002">
    <property type="entry name" value="Hemagglutinin"/>
    <property type="match status" value="1"/>
</dbReference>
<dbReference type="Gene3D" id="3.90.20.10">
    <property type="match status" value="1"/>
</dbReference>
<dbReference type="Gene3D" id="3.90.209.20">
    <property type="match status" value="1"/>
</dbReference>
<dbReference type="Gene3D" id="2.10.77.10">
    <property type="entry name" value="Hemagglutinin Chain A, Domain 2"/>
    <property type="match status" value="1"/>
</dbReference>
<dbReference type="HAMAP" id="MF_04072">
    <property type="entry name" value="INFV_HEMA"/>
    <property type="match status" value="1"/>
</dbReference>
<dbReference type="InterPro" id="IPR008980">
    <property type="entry name" value="Capsid_hemagglutn"/>
</dbReference>
<dbReference type="InterPro" id="IPR013828">
    <property type="entry name" value="Hemagglutn_HA1_a/b_dom_sf"/>
</dbReference>
<dbReference type="InterPro" id="IPR000149">
    <property type="entry name" value="Hemagglutn_influenz_A"/>
</dbReference>
<dbReference type="InterPro" id="IPR001364">
    <property type="entry name" value="Hemagglutn_influenz_A/B"/>
</dbReference>
<dbReference type="Pfam" id="PF00509">
    <property type="entry name" value="Hemagglutinin"/>
    <property type="match status" value="1"/>
</dbReference>
<dbReference type="PRINTS" id="PR00330">
    <property type="entry name" value="HEMAGGLUTN1"/>
</dbReference>
<dbReference type="PRINTS" id="PR00329">
    <property type="entry name" value="HEMAGGLUTN12"/>
</dbReference>
<dbReference type="SUPFAM" id="SSF58064">
    <property type="entry name" value="Influenza hemagglutinin (stalk)"/>
    <property type="match status" value="1"/>
</dbReference>
<dbReference type="SUPFAM" id="SSF49818">
    <property type="entry name" value="Viral protein domain"/>
    <property type="match status" value="1"/>
</dbReference>